<protein>
    <recommendedName>
        <fullName evidence="1">Photosystem I P700 chlorophyll a apoprotein A1</fullName>
        <ecNumber evidence="1">1.97.1.12</ecNumber>
    </recommendedName>
    <alternativeName>
        <fullName evidence="1">PSI-A</fullName>
    </alternativeName>
    <alternativeName>
        <fullName evidence="1">PsaA</fullName>
    </alternativeName>
</protein>
<gene>
    <name evidence="1" type="primary">psaA</name>
</gene>
<evidence type="ECO:0000255" key="1">
    <source>
        <dbReference type="HAMAP-Rule" id="MF_00458"/>
    </source>
</evidence>
<organism>
    <name type="scientific">Capsella bursa-pastoris</name>
    <name type="common">Shepherd's purse</name>
    <name type="synonym">Thlaspi bursa-pastoris</name>
    <dbReference type="NCBI Taxonomy" id="3719"/>
    <lineage>
        <taxon>Eukaryota</taxon>
        <taxon>Viridiplantae</taxon>
        <taxon>Streptophyta</taxon>
        <taxon>Embryophyta</taxon>
        <taxon>Tracheophyta</taxon>
        <taxon>Spermatophyta</taxon>
        <taxon>Magnoliopsida</taxon>
        <taxon>eudicotyledons</taxon>
        <taxon>Gunneridae</taxon>
        <taxon>Pentapetalae</taxon>
        <taxon>rosids</taxon>
        <taxon>malvids</taxon>
        <taxon>Brassicales</taxon>
        <taxon>Brassicaceae</taxon>
        <taxon>Camelineae</taxon>
        <taxon>Capsella</taxon>
    </lineage>
</organism>
<sequence length="750" mass="83217">MIIRSPEPEVKILVDRDPIKTSFEEWAKPGHFSRTIAKGPDTTTWIWNLHADAHDFDSHTSDLEEISRKVFSAHFGQLSIIFLWLSGMYFHGARFSNYEAWLSDPTHIGPSAQVVWPIVGQEILNGDVGGGFRGIQITSGFFQIWRASGITSELQLYCTAIGALVFAALMLFAGWFHYHKAAPKLAWFQDVESMLNHHLAGLLGLGSLSWAGHQVHVSLPINQFLNAGVDPKEIPLPHEFILNRDLLAQLYPSFAEGATPFFTLNWSKYSEFLTFRGGLDPVTGGLWLTDIAHHHLAIAILFLIAGHMYRTNWGIGHGIKDILEAHKGPFTGQGHKGLYEILTTSWHAQLSLNLAMLGSLTIIVAHHMYSMPPYPYLATDYATQLSLFTHHMWIGGFLIVGAAAHAAIFMVRDYDPTNRYNDLLDRVLRHRDAIISHLNWVCIFLGFHSFGLYIHNDTMSALGRPQDMFSDTAIQLQPVFAQWIQNTHALAPGVTAPGETASTSLTWGGGELVAVGGKVALLPIPLGTADFLVHHIHAFTIHVTVLILLKGVLFARSSRLIPDKANLGFRFPCDGPGRGGTCQVSAWDHVFLGLFWMYNAISVVIFHFSWKMQSDVWGSISDQGVVTHITGGNFAQSSITINGWLRDFLWAQASQVIQSYGSSLSAYGLFFLGAHFVWAFSLMFLFSGRGYWQELIESIVWAHNKLKVAPATQPRALSIVQGRAVGVTHYLLGGIATTWAFFLARIIAVG</sequence>
<dbReference type="EC" id="1.97.1.12" evidence="1"/>
<dbReference type="EMBL" id="AP009371">
    <property type="protein sequence ID" value="BAF50197.1"/>
    <property type="molecule type" value="Genomic_DNA"/>
</dbReference>
<dbReference type="RefSeq" id="YP_001123373.1">
    <property type="nucleotide sequence ID" value="NC_009270.1"/>
</dbReference>
<dbReference type="SMR" id="A4QKJ2"/>
<dbReference type="GeneID" id="4961733"/>
<dbReference type="GO" id="GO:0009535">
    <property type="term" value="C:chloroplast thylakoid membrane"/>
    <property type="evidence" value="ECO:0007669"/>
    <property type="project" value="UniProtKB-SubCell"/>
</dbReference>
<dbReference type="GO" id="GO:0009522">
    <property type="term" value="C:photosystem I"/>
    <property type="evidence" value="ECO:0007669"/>
    <property type="project" value="UniProtKB-KW"/>
</dbReference>
<dbReference type="GO" id="GO:0051539">
    <property type="term" value="F:4 iron, 4 sulfur cluster binding"/>
    <property type="evidence" value="ECO:0007669"/>
    <property type="project" value="UniProtKB-KW"/>
</dbReference>
<dbReference type="GO" id="GO:0016168">
    <property type="term" value="F:chlorophyll binding"/>
    <property type="evidence" value="ECO:0007669"/>
    <property type="project" value="UniProtKB-KW"/>
</dbReference>
<dbReference type="GO" id="GO:0009055">
    <property type="term" value="F:electron transfer activity"/>
    <property type="evidence" value="ECO:0007669"/>
    <property type="project" value="UniProtKB-UniRule"/>
</dbReference>
<dbReference type="GO" id="GO:0000287">
    <property type="term" value="F:magnesium ion binding"/>
    <property type="evidence" value="ECO:0007669"/>
    <property type="project" value="UniProtKB-UniRule"/>
</dbReference>
<dbReference type="GO" id="GO:0016491">
    <property type="term" value="F:oxidoreductase activity"/>
    <property type="evidence" value="ECO:0007669"/>
    <property type="project" value="UniProtKB-KW"/>
</dbReference>
<dbReference type="GO" id="GO:0015979">
    <property type="term" value="P:photosynthesis"/>
    <property type="evidence" value="ECO:0007669"/>
    <property type="project" value="UniProtKB-UniRule"/>
</dbReference>
<dbReference type="FunFam" id="1.20.1130.10:FF:000001">
    <property type="entry name" value="Photosystem I P700 chlorophyll a apoprotein A2"/>
    <property type="match status" value="1"/>
</dbReference>
<dbReference type="Gene3D" id="1.20.1130.10">
    <property type="entry name" value="Photosystem I PsaA/PsaB"/>
    <property type="match status" value="1"/>
</dbReference>
<dbReference type="HAMAP" id="MF_00458">
    <property type="entry name" value="PSI_PsaA"/>
    <property type="match status" value="1"/>
</dbReference>
<dbReference type="InterPro" id="IPR006243">
    <property type="entry name" value="PSI_PsaA"/>
</dbReference>
<dbReference type="InterPro" id="IPR001280">
    <property type="entry name" value="PSI_PsaA/B"/>
</dbReference>
<dbReference type="InterPro" id="IPR020586">
    <property type="entry name" value="PSI_PsaA/B_CS"/>
</dbReference>
<dbReference type="InterPro" id="IPR036408">
    <property type="entry name" value="PSI_PsaA/B_sf"/>
</dbReference>
<dbReference type="NCBIfam" id="TIGR01335">
    <property type="entry name" value="psaA"/>
    <property type="match status" value="1"/>
</dbReference>
<dbReference type="PANTHER" id="PTHR30128">
    <property type="entry name" value="OUTER MEMBRANE PROTEIN, OMPA-RELATED"/>
    <property type="match status" value="1"/>
</dbReference>
<dbReference type="PANTHER" id="PTHR30128:SF19">
    <property type="entry name" value="PHOTOSYSTEM I P700 CHLOROPHYLL A APOPROTEIN A1-RELATED"/>
    <property type="match status" value="1"/>
</dbReference>
<dbReference type="Pfam" id="PF00223">
    <property type="entry name" value="PsaA_PsaB"/>
    <property type="match status" value="1"/>
</dbReference>
<dbReference type="PIRSF" id="PIRSF002905">
    <property type="entry name" value="PSI_A"/>
    <property type="match status" value="1"/>
</dbReference>
<dbReference type="PRINTS" id="PR00257">
    <property type="entry name" value="PHOTSYSPSAAB"/>
</dbReference>
<dbReference type="SUPFAM" id="SSF81558">
    <property type="entry name" value="Photosystem I subunits PsaA/PsaB"/>
    <property type="match status" value="1"/>
</dbReference>
<dbReference type="PROSITE" id="PS00419">
    <property type="entry name" value="PHOTOSYSTEM_I_PSAAB"/>
    <property type="match status" value="1"/>
</dbReference>
<accession>A4QKJ2</accession>
<proteinExistence type="inferred from homology"/>
<keyword id="KW-0004">4Fe-4S</keyword>
<keyword id="KW-0148">Chlorophyll</keyword>
<keyword id="KW-0150">Chloroplast</keyword>
<keyword id="KW-0157">Chromophore</keyword>
<keyword id="KW-0249">Electron transport</keyword>
<keyword id="KW-0408">Iron</keyword>
<keyword id="KW-0411">Iron-sulfur</keyword>
<keyword id="KW-0460">Magnesium</keyword>
<keyword id="KW-0472">Membrane</keyword>
<keyword id="KW-0479">Metal-binding</keyword>
<keyword id="KW-0560">Oxidoreductase</keyword>
<keyword id="KW-0602">Photosynthesis</keyword>
<keyword id="KW-0603">Photosystem I</keyword>
<keyword id="KW-0934">Plastid</keyword>
<keyword id="KW-0793">Thylakoid</keyword>
<keyword id="KW-0812">Transmembrane</keyword>
<keyword id="KW-1133">Transmembrane helix</keyword>
<keyword id="KW-0813">Transport</keyword>
<comment type="function">
    <text>PsaA and PsaB bind P700, the primary electron donor of photosystem I (PSI), as well as the electron acceptors A0, A1 and FX. PSI is a plastocyanin-ferredoxin oxidoreductase, converting photonic excitation into a charge separation, which transfers an electron from the donor P700 chlorophyll pair to the spectroscopically characterized acceptors A0, A1, FX, FA and FB in turn. Oxidized P700 is reduced on the lumenal side of the thylakoid membrane by plastocyanin.</text>
</comment>
<comment type="catalytic activity">
    <reaction evidence="1">
        <text>reduced [plastocyanin] + hnu + oxidized [2Fe-2S]-[ferredoxin] = oxidized [plastocyanin] + reduced [2Fe-2S]-[ferredoxin]</text>
        <dbReference type="Rhea" id="RHEA:30407"/>
        <dbReference type="Rhea" id="RHEA-COMP:10000"/>
        <dbReference type="Rhea" id="RHEA-COMP:10001"/>
        <dbReference type="Rhea" id="RHEA-COMP:10039"/>
        <dbReference type="Rhea" id="RHEA-COMP:10040"/>
        <dbReference type="ChEBI" id="CHEBI:29036"/>
        <dbReference type="ChEBI" id="CHEBI:30212"/>
        <dbReference type="ChEBI" id="CHEBI:33737"/>
        <dbReference type="ChEBI" id="CHEBI:33738"/>
        <dbReference type="ChEBI" id="CHEBI:49552"/>
        <dbReference type="EC" id="1.97.1.12"/>
    </reaction>
</comment>
<comment type="cofactor">
    <text evidence="1">P700 is a chlorophyll a/chlorophyll a' dimer, A0 is one or more chlorophyll a, A1 is one or both phylloquinones and FX is a shared 4Fe-4S iron-sulfur center.</text>
</comment>
<comment type="subunit">
    <text evidence="1">The PsaA/B heterodimer binds the P700 chlorophyll special pair and subsequent electron acceptors. PSI consists of a core antenna complex that captures photons, and an electron transfer chain that converts photonic excitation into a charge separation. The eukaryotic PSI reaction center is composed of at least 11 subunits.</text>
</comment>
<comment type="subcellular location">
    <subcellularLocation>
        <location evidence="1">Plastid</location>
        <location evidence="1">Chloroplast thylakoid membrane</location>
        <topology evidence="1">Multi-pass membrane protein</topology>
    </subcellularLocation>
</comment>
<comment type="similarity">
    <text evidence="1">Belongs to the PsaA/PsaB family.</text>
</comment>
<name>PSAA_CAPBU</name>
<geneLocation type="chloroplast"/>
<reference key="1">
    <citation type="submission" date="2007-03" db="EMBL/GenBank/DDBJ databases">
        <title>Sequencing analysis of Capsella bursa-pastoris JO22 chloroplast DNA.</title>
        <authorList>
            <person name="Hosouchi T."/>
            <person name="Tsuruoka H."/>
            <person name="Kotani H."/>
        </authorList>
    </citation>
    <scope>NUCLEOTIDE SEQUENCE [LARGE SCALE GENOMIC DNA]</scope>
</reference>
<feature type="chain" id="PRO_0000294218" description="Photosystem I P700 chlorophyll a apoprotein A1">
    <location>
        <begin position="1"/>
        <end position="750"/>
    </location>
</feature>
<feature type="transmembrane region" description="Helical; Name=I" evidence="1">
    <location>
        <begin position="70"/>
        <end position="93"/>
    </location>
</feature>
<feature type="transmembrane region" description="Helical; Name=II" evidence="1">
    <location>
        <begin position="156"/>
        <end position="179"/>
    </location>
</feature>
<feature type="transmembrane region" description="Helical; Name=III" evidence="1">
    <location>
        <begin position="195"/>
        <end position="219"/>
    </location>
</feature>
<feature type="transmembrane region" description="Helical; Name=IV" evidence="1">
    <location>
        <begin position="291"/>
        <end position="309"/>
    </location>
</feature>
<feature type="transmembrane region" description="Helical; Name=V" evidence="1">
    <location>
        <begin position="346"/>
        <end position="369"/>
    </location>
</feature>
<feature type="transmembrane region" description="Helical; Name=VI" evidence="1">
    <location>
        <begin position="385"/>
        <end position="411"/>
    </location>
</feature>
<feature type="transmembrane region" description="Helical; Name=VII" evidence="1">
    <location>
        <begin position="433"/>
        <end position="455"/>
    </location>
</feature>
<feature type="transmembrane region" description="Helical; Name=VIII" evidence="1">
    <location>
        <begin position="531"/>
        <end position="549"/>
    </location>
</feature>
<feature type="transmembrane region" description="Helical; Name=IX" evidence="1">
    <location>
        <begin position="589"/>
        <end position="610"/>
    </location>
</feature>
<feature type="transmembrane region" description="Helical; Name=X" evidence="1">
    <location>
        <begin position="664"/>
        <end position="686"/>
    </location>
</feature>
<feature type="transmembrane region" description="Helical; Name=XI" evidence="1">
    <location>
        <begin position="724"/>
        <end position="744"/>
    </location>
</feature>
<feature type="binding site" evidence="1">
    <location>
        <position position="573"/>
    </location>
    <ligand>
        <name>[4Fe-4S] cluster</name>
        <dbReference type="ChEBI" id="CHEBI:49883"/>
        <note>ligand shared between dimeric partners</note>
    </ligand>
</feature>
<feature type="binding site" evidence="1">
    <location>
        <position position="582"/>
    </location>
    <ligand>
        <name>[4Fe-4S] cluster</name>
        <dbReference type="ChEBI" id="CHEBI:49883"/>
        <note>ligand shared between dimeric partners</note>
    </ligand>
</feature>
<feature type="binding site" description="axial binding residue" evidence="1">
    <location>
        <position position="675"/>
    </location>
    <ligand>
        <name>chlorophyll a'</name>
        <dbReference type="ChEBI" id="CHEBI:189419"/>
        <label>A1</label>
    </ligand>
    <ligandPart>
        <name>Mg</name>
        <dbReference type="ChEBI" id="CHEBI:25107"/>
    </ligandPart>
</feature>
<feature type="binding site" description="axial binding residue" evidence="1">
    <location>
        <position position="683"/>
    </location>
    <ligand>
        <name>chlorophyll a</name>
        <dbReference type="ChEBI" id="CHEBI:58416"/>
        <label>A3</label>
    </ligand>
    <ligandPart>
        <name>Mg</name>
        <dbReference type="ChEBI" id="CHEBI:25107"/>
    </ligandPart>
</feature>
<feature type="binding site" evidence="1">
    <location>
        <position position="691"/>
    </location>
    <ligand>
        <name>chlorophyll a</name>
        <dbReference type="ChEBI" id="CHEBI:58416"/>
        <label>A3</label>
    </ligand>
</feature>
<feature type="binding site" evidence="1">
    <location>
        <position position="692"/>
    </location>
    <ligand>
        <name>phylloquinone</name>
        <dbReference type="ChEBI" id="CHEBI:18067"/>
        <label>A</label>
    </ligand>
</feature>